<evidence type="ECO:0000255" key="1">
    <source>
        <dbReference type="HAMAP-Rule" id="MF_01023"/>
    </source>
</evidence>
<keyword id="KW-0028">Amino-acid biosynthesis</keyword>
<keyword id="KW-0032">Aminotransferase</keyword>
<keyword id="KW-0368">Histidine biosynthesis</keyword>
<keyword id="KW-0663">Pyridoxal phosphate</keyword>
<keyword id="KW-0808">Transferase</keyword>
<reference key="1">
    <citation type="submission" date="2006-12" db="EMBL/GenBank/DDBJ databases">
        <authorList>
            <person name="Fouts D.E."/>
            <person name="Nelson K.E."/>
            <person name="Sebastian Y."/>
        </authorList>
    </citation>
    <scope>NUCLEOTIDE SEQUENCE [LARGE SCALE GENOMIC DNA]</scope>
    <source>
        <strain>81-176</strain>
    </source>
</reference>
<dbReference type="EC" id="2.6.1.9" evidence="1"/>
<dbReference type="EMBL" id="CP000538">
    <property type="protein sequence ID" value="EAQ73354.1"/>
    <property type="molecule type" value="Genomic_DNA"/>
</dbReference>
<dbReference type="RefSeq" id="WP_002868749.1">
    <property type="nucleotide sequence ID" value="NC_008787.1"/>
</dbReference>
<dbReference type="SMR" id="A1VY36"/>
<dbReference type="KEGG" id="cjj:CJJ81176_0339"/>
<dbReference type="eggNOG" id="COG0079">
    <property type="taxonomic scope" value="Bacteria"/>
</dbReference>
<dbReference type="HOGENOM" id="CLU_017584_3_3_7"/>
<dbReference type="UniPathway" id="UPA00031">
    <property type="reaction ID" value="UER00012"/>
</dbReference>
<dbReference type="Proteomes" id="UP000000646">
    <property type="component" value="Chromosome"/>
</dbReference>
<dbReference type="GO" id="GO:0004400">
    <property type="term" value="F:histidinol-phosphate transaminase activity"/>
    <property type="evidence" value="ECO:0007669"/>
    <property type="project" value="UniProtKB-UniRule"/>
</dbReference>
<dbReference type="GO" id="GO:0030170">
    <property type="term" value="F:pyridoxal phosphate binding"/>
    <property type="evidence" value="ECO:0007669"/>
    <property type="project" value="InterPro"/>
</dbReference>
<dbReference type="GO" id="GO:0000105">
    <property type="term" value="P:L-histidine biosynthetic process"/>
    <property type="evidence" value="ECO:0007669"/>
    <property type="project" value="UniProtKB-UniRule"/>
</dbReference>
<dbReference type="CDD" id="cd00609">
    <property type="entry name" value="AAT_like"/>
    <property type="match status" value="1"/>
</dbReference>
<dbReference type="Gene3D" id="3.90.1150.10">
    <property type="entry name" value="Aspartate Aminotransferase, domain 1"/>
    <property type="match status" value="1"/>
</dbReference>
<dbReference type="Gene3D" id="3.40.640.10">
    <property type="entry name" value="Type I PLP-dependent aspartate aminotransferase-like (Major domain)"/>
    <property type="match status" value="1"/>
</dbReference>
<dbReference type="HAMAP" id="MF_01023">
    <property type="entry name" value="HisC_aminotrans_2"/>
    <property type="match status" value="1"/>
</dbReference>
<dbReference type="InterPro" id="IPR004839">
    <property type="entry name" value="Aminotransferase_I/II_large"/>
</dbReference>
<dbReference type="InterPro" id="IPR005861">
    <property type="entry name" value="HisP_aminotrans"/>
</dbReference>
<dbReference type="InterPro" id="IPR050106">
    <property type="entry name" value="HistidinolP_aminotransfase"/>
</dbReference>
<dbReference type="InterPro" id="IPR015424">
    <property type="entry name" value="PyrdxlP-dep_Trfase"/>
</dbReference>
<dbReference type="InterPro" id="IPR015421">
    <property type="entry name" value="PyrdxlP-dep_Trfase_major"/>
</dbReference>
<dbReference type="InterPro" id="IPR015422">
    <property type="entry name" value="PyrdxlP-dep_Trfase_small"/>
</dbReference>
<dbReference type="NCBIfam" id="TIGR01141">
    <property type="entry name" value="hisC"/>
    <property type="match status" value="1"/>
</dbReference>
<dbReference type="PANTHER" id="PTHR43643:SF3">
    <property type="entry name" value="HISTIDINOL-PHOSPHATE AMINOTRANSFERASE"/>
    <property type="match status" value="1"/>
</dbReference>
<dbReference type="PANTHER" id="PTHR43643">
    <property type="entry name" value="HISTIDINOL-PHOSPHATE AMINOTRANSFERASE 2"/>
    <property type="match status" value="1"/>
</dbReference>
<dbReference type="Pfam" id="PF00155">
    <property type="entry name" value="Aminotran_1_2"/>
    <property type="match status" value="1"/>
</dbReference>
<dbReference type="SUPFAM" id="SSF53383">
    <property type="entry name" value="PLP-dependent transferases"/>
    <property type="match status" value="1"/>
</dbReference>
<feature type="chain" id="PRO_1000063468" description="Histidinol-phosphate aminotransferase">
    <location>
        <begin position="1"/>
        <end position="364"/>
    </location>
</feature>
<feature type="modified residue" description="N6-(pyridoxal phosphate)lysine" evidence="1">
    <location>
        <position position="226"/>
    </location>
</feature>
<gene>
    <name evidence="1" type="primary">hisC</name>
    <name type="ordered locus">CJJ81176_0339</name>
</gene>
<protein>
    <recommendedName>
        <fullName evidence="1">Histidinol-phosphate aminotransferase</fullName>
        <ecNumber evidence="1">2.6.1.9</ecNumber>
    </recommendedName>
    <alternativeName>
        <fullName evidence="1">Imidazole acetol-phosphate transaminase</fullName>
    </alternativeName>
</protein>
<name>HIS8_CAMJJ</name>
<accession>A1VY36</accession>
<organism>
    <name type="scientific">Campylobacter jejuni subsp. jejuni serotype O:23/36 (strain 81-176)</name>
    <dbReference type="NCBI Taxonomy" id="354242"/>
    <lineage>
        <taxon>Bacteria</taxon>
        <taxon>Pseudomonadati</taxon>
        <taxon>Campylobacterota</taxon>
        <taxon>Epsilonproteobacteria</taxon>
        <taxon>Campylobacterales</taxon>
        <taxon>Campylobacteraceae</taxon>
        <taxon>Campylobacter</taxon>
    </lineage>
</organism>
<proteinExistence type="inferred from homology"/>
<sequence length="364" mass="41350">MKFNEFLNHLSNYEPGKDIEVIAKEYGVKEVIKLASNENPFGTPPKAIECLRQNANKAHLYPDDSMIELKSTLAQKYKVQNENIIIGAGSDQVIEFAIHAKLNSKNAFLQAGVTFAMYEIYAKQCGAKCYKTQSITHDLNEFKKLYEAHKDEIKLIFLCLPNNPLGECLDASEVTKFIKGVDEDCLVVIDAAYNEFASFKDSKKHLEPCELIKEFDNVLYLGTFSKLYGLGGLRIGYGIANANIISAFYKLRAPFNVSNLALKAAVAAINDDEFAKKTLENNFSQMELYKEFAKKYDIKIIDSYTNFITYFFDEKNSTDLSEKLLKKGIIIRNLKSYGLNAIRITIGTSYENEKFFTEFDKILR</sequence>
<comment type="catalytic activity">
    <reaction evidence="1">
        <text>L-histidinol phosphate + 2-oxoglutarate = 3-(imidazol-4-yl)-2-oxopropyl phosphate + L-glutamate</text>
        <dbReference type="Rhea" id="RHEA:23744"/>
        <dbReference type="ChEBI" id="CHEBI:16810"/>
        <dbReference type="ChEBI" id="CHEBI:29985"/>
        <dbReference type="ChEBI" id="CHEBI:57766"/>
        <dbReference type="ChEBI" id="CHEBI:57980"/>
        <dbReference type="EC" id="2.6.1.9"/>
    </reaction>
</comment>
<comment type="cofactor">
    <cofactor evidence="1">
        <name>pyridoxal 5'-phosphate</name>
        <dbReference type="ChEBI" id="CHEBI:597326"/>
    </cofactor>
</comment>
<comment type="pathway">
    <text evidence="1">Amino-acid biosynthesis; L-histidine biosynthesis; L-histidine from 5-phospho-alpha-D-ribose 1-diphosphate: step 7/9.</text>
</comment>
<comment type="subunit">
    <text evidence="1">Homodimer.</text>
</comment>
<comment type="similarity">
    <text evidence="1">Belongs to the class-II pyridoxal-phosphate-dependent aminotransferase family. Histidinol-phosphate aminotransferase subfamily.</text>
</comment>